<reference key="1">
    <citation type="journal article" date="2010" name="J. Bacteriol.">
        <title>Genome sequence of the deep-rooted Yersinia pestis strain Angola reveals new insights into the evolution and pangenome of the plague bacterium.</title>
        <authorList>
            <person name="Eppinger M."/>
            <person name="Worsham P.L."/>
            <person name="Nikolich M.P."/>
            <person name="Riley D.R."/>
            <person name="Sebastian Y."/>
            <person name="Mou S."/>
            <person name="Achtman M."/>
            <person name="Lindler L.E."/>
            <person name="Ravel J."/>
        </authorList>
    </citation>
    <scope>NUCLEOTIDE SEQUENCE [LARGE SCALE GENOMIC DNA]</scope>
    <source>
        <strain>Angola</strain>
    </source>
</reference>
<dbReference type="EMBL" id="CP000901">
    <property type="protein sequence ID" value="ABX85162.1"/>
    <property type="molecule type" value="Genomic_DNA"/>
</dbReference>
<dbReference type="RefSeq" id="WP_002212301.1">
    <property type="nucleotide sequence ID" value="NZ_CP009935.1"/>
</dbReference>
<dbReference type="SMR" id="A9R484"/>
<dbReference type="KEGG" id="ypg:YpAngola_A3698"/>
<dbReference type="PATRIC" id="fig|349746.12.peg.403"/>
<dbReference type="Gene3D" id="1.10.10.610">
    <property type="entry name" value="YehU-like"/>
    <property type="match status" value="1"/>
</dbReference>
<dbReference type="HAMAP" id="MF_00690">
    <property type="entry name" value="UPF0270"/>
    <property type="match status" value="1"/>
</dbReference>
<dbReference type="InterPro" id="IPR010648">
    <property type="entry name" value="UPF0270"/>
</dbReference>
<dbReference type="InterPro" id="IPR036685">
    <property type="entry name" value="YehU-like_sf"/>
</dbReference>
<dbReference type="NCBIfam" id="NF003438">
    <property type="entry name" value="PRK04966.1"/>
    <property type="match status" value="1"/>
</dbReference>
<dbReference type="Pfam" id="PF06794">
    <property type="entry name" value="UPF0270"/>
    <property type="match status" value="1"/>
</dbReference>
<dbReference type="PIRSF" id="PIRSF006169">
    <property type="entry name" value="UCP006169"/>
    <property type="match status" value="1"/>
</dbReference>
<dbReference type="SUPFAM" id="SSF118001">
    <property type="entry name" value="YehU-like"/>
    <property type="match status" value="1"/>
</dbReference>
<organism>
    <name type="scientific">Yersinia pestis bv. Antiqua (strain Angola)</name>
    <dbReference type="NCBI Taxonomy" id="349746"/>
    <lineage>
        <taxon>Bacteria</taxon>
        <taxon>Pseudomonadati</taxon>
        <taxon>Pseudomonadota</taxon>
        <taxon>Gammaproteobacteria</taxon>
        <taxon>Enterobacterales</taxon>
        <taxon>Yersiniaceae</taxon>
        <taxon>Yersinia</taxon>
    </lineage>
</organism>
<gene>
    <name type="ordered locus">YpAngola_A3698</name>
</gene>
<proteinExistence type="inferred from homology"/>
<name>Y3698_YERPG</name>
<evidence type="ECO:0000255" key="1">
    <source>
        <dbReference type="HAMAP-Rule" id="MF_00690"/>
    </source>
</evidence>
<accession>A9R484</accession>
<sequence length="78" mass="8926">MIIPWQQVDSETLDNLLEAFVLREGTDYGEHERSLTEKVADVRRQLVSGEAVLVWSELHETINIMPRGSFRAGAEEQQ</sequence>
<protein>
    <recommendedName>
        <fullName evidence="1">UPF0270 protein YpAngola_A3698</fullName>
    </recommendedName>
</protein>
<feature type="chain" id="PRO_1000132030" description="UPF0270 protein YpAngola_A3698">
    <location>
        <begin position="1"/>
        <end position="78"/>
    </location>
</feature>
<comment type="similarity">
    <text evidence="1">Belongs to the UPF0270 family.</text>
</comment>